<proteinExistence type="evidence at protein level"/>
<organism>
    <name type="scientific">Trypanosoma brucei brucei</name>
    <dbReference type="NCBI Taxonomy" id="5702"/>
    <lineage>
        <taxon>Eukaryota</taxon>
        <taxon>Discoba</taxon>
        <taxon>Euglenozoa</taxon>
        <taxon>Kinetoplastea</taxon>
        <taxon>Metakinetoplastina</taxon>
        <taxon>Trypanosomatida</taxon>
        <taxon>Trypanosomatidae</taxon>
        <taxon>Trypanosoma</taxon>
    </lineage>
</organism>
<comment type="function">
    <text evidence="2 3">Terminal uridylyltransferase which, as part of the mitochondrial RNA editing core-like complex (RECC-like), is involved in the post-transcriptional editing of mitochondrial RNA, a process involving the addition and deletion of uridine (U) nucleotides in the pre-mRNA (PubMed:19465686). Specifically, catalyzes the addition of U to single-stranded RNA with a preference for a 3'-terminal U and adds the number of Us specified by a guide RNA (gRNA) to precleaved double-stranded RNA editing substrates (PubMed:19465686, PubMed:20403364). Essential for insect and bloodstream developmental forms viability (PubMed:19465686).</text>
</comment>
<comment type="catalytic activity">
    <reaction evidence="2 3">
        <text>RNA(n) + UTP = RNA(n)-3'-uridine ribonucleotide + diphosphate</text>
        <dbReference type="Rhea" id="RHEA:14785"/>
        <dbReference type="Rhea" id="RHEA-COMP:14527"/>
        <dbReference type="Rhea" id="RHEA-COMP:17348"/>
        <dbReference type="ChEBI" id="CHEBI:33019"/>
        <dbReference type="ChEBI" id="CHEBI:46398"/>
        <dbReference type="ChEBI" id="CHEBI:140395"/>
        <dbReference type="ChEBI" id="CHEBI:173116"/>
        <dbReference type="EC" id="2.7.7.52"/>
    </reaction>
</comment>
<comment type="cofactor">
    <cofactor evidence="2">
        <name>Mg(2+)</name>
        <dbReference type="ChEBI" id="CHEBI:18420"/>
    </cofactor>
    <text evidence="3">Binds 1 Mg(2+) per subunit.</text>
</comment>
<comment type="biophysicochemical properties">
    <kinetics>
        <KM evidence="2">3.6 uM for UTP (with 6(U) single-stranded RNA as substrate)</KM>
        <KM evidence="2">1 uM for UTP (with double-stranded RNA as substrate)</KM>
        <text evidence="2">kcat is 0.18 min(-1) with UTP and 6(U) single-stranded RNA as substrates (PubMed:19465686). kcat is 0.04 min(-1) with UTP and double-stranded RNA as substrates (PubMed:19465686).</text>
    </kinetics>
</comment>
<comment type="subunit">
    <text evidence="2">Component of the mitochondrial RNA editing core complex-like (RECC-like), also known as the editosome-like complex; only a small proportion of MEAT1 associates with the complex (PubMed:19465686). Interacts with RNA-editing ligase REL1 (PubMed:19465686).</text>
</comment>
<comment type="subcellular location">
    <subcellularLocation>
        <location evidence="2">Mitochondrion matrix</location>
    </subcellularLocation>
</comment>
<comment type="disruption phenotype">
    <text evidence="2">RNAi-mediated knockdown in the procyclic form causes growth arrest (PubMed:19465686). Moderately increases the abundance of mitochondrial RNAs without causing defects in RNA editing (PubMed:19465686).</text>
</comment>
<comment type="similarity">
    <text evidence="6">Belongs to the DNA polymerase type-B-like family.</text>
</comment>
<comment type="sequence caution" evidence="6">
    <conflict type="miscellaneous discrepancy">
        <sequence resource="EMBL-CDS" id="ACT83521"/>
    </conflict>
    <text>The submitted sequence corresponds to a mutated form and contains an Ala residue at position 67 instead of an Asp residue.</text>
</comment>
<reference evidence="7" key="1">
    <citation type="journal article" date="2009" name="RNA">
        <title>Novel TUTase associates with an editosome-like complex in mitochondria of Trypanosoma brucei.</title>
        <authorList>
            <person name="Aphasizheva I."/>
            <person name="Ringpis G.E."/>
            <person name="Weng J."/>
            <person name="Gershon P.D."/>
            <person name="Lathrop R.H."/>
            <person name="Aphasizhev R."/>
        </authorList>
    </citation>
    <scope>NUCLEOTIDE SEQUENCE [GENOMIC DNA]</scope>
    <scope>FUNCTION</scope>
    <scope>CATALYTIC ACTIVITY</scope>
    <scope>COFACTOR</scope>
    <scope>BIOPHYSICOCHEMICAL PROPERTIES</scope>
    <scope>IDENTIFICATION IN THE RECC-LIKE COMPLEX</scope>
    <scope>INTERACTION WITH REL1</scope>
    <scope>SUBCELLULAR LOCATION</scope>
    <scope>DISRUPTION PHENOTYPE</scope>
    <scope>MUTAGENESIS OF ASP-67</scope>
</reference>
<reference evidence="8 9 10" key="2">
    <citation type="journal article" date="2010" name="J. Mol. Biol.">
        <title>Structure of the mitochondrial editosome-like complex associated TUTase 1 reveals divergent mechanisms of UTP selection and domain organization.</title>
        <authorList>
            <person name="Stagno J."/>
            <person name="Aphasizheva I."/>
            <person name="Bruystens J."/>
            <person name="Luecke H."/>
            <person name="Aphasizhev R."/>
        </authorList>
    </citation>
    <scope>X-RAY CRYSTALLOGRAPHY (1.56 ANGSTROMS) OF 3-385 IN COMPLEX WITH UTP AND MAGNESIUM</scope>
    <scope>FUNCTION</scope>
    <scope>CATALYTIC ACTIVITY</scope>
    <scope>COFACTOR</scope>
    <scope>MUTAGENESIS OF 2-ASN--HIS-25; ASP-67; ASN-141; ASN-181; PHE-183; ASP-335; ASN-338; CYS-342; ARG-344 AND ARG-345</scope>
</reference>
<keyword id="KW-0002">3D-structure</keyword>
<keyword id="KW-0460">Magnesium</keyword>
<keyword id="KW-0479">Metal-binding</keyword>
<keyword id="KW-0496">Mitochondrion</keyword>
<keyword id="KW-0507">mRNA processing</keyword>
<keyword id="KW-0547">Nucleotide-binding</keyword>
<keyword id="KW-0548">Nucleotidyltransferase</keyword>
<keyword id="KW-0808">Transferase</keyword>
<keyword id="KW-0809">Transit peptide</keyword>
<accession>C7AJA4</accession>
<dbReference type="EC" id="2.7.7.52" evidence="2 3"/>
<dbReference type="EMBL" id="FJ561337">
    <property type="protein sequence ID" value="ACT83521.1"/>
    <property type="status" value="ALT_SEQ"/>
    <property type="molecule type" value="Genomic_DNA"/>
</dbReference>
<dbReference type="PDB" id="3HIY">
    <property type="method" value="X-ray"/>
    <property type="resolution" value="2.30 A"/>
    <property type="chains" value="A/B=3-385"/>
</dbReference>
<dbReference type="PDB" id="3HJ1">
    <property type="method" value="X-ray"/>
    <property type="resolution" value="1.95 A"/>
    <property type="chains" value="A/B=1-385"/>
</dbReference>
<dbReference type="PDB" id="3HJ4">
    <property type="method" value="X-ray"/>
    <property type="resolution" value="1.56 A"/>
    <property type="chains" value="A/B=3-385"/>
</dbReference>
<dbReference type="PDBsum" id="3HIY"/>
<dbReference type="PDBsum" id="3HJ1"/>
<dbReference type="PDBsum" id="3HJ4"/>
<dbReference type="SMR" id="C7AJA4"/>
<dbReference type="OMA" id="GAYIHLV"/>
<dbReference type="BRENDA" id="2.7.7.52">
    <property type="organism ID" value="6519"/>
</dbReference>
<dbReference type="EvolutionaryTrace" id="C7AJA4"/>
<dbReference type="GO" id="GO:0005759">
    <property type="term" value="C:mitochondrial matrix"/>
    <property type="evidence" value="ECO:0007669"/>
    <property type="project" value="UniProtKB-SubCell"/>
</dbReference>
<dbReference type="GO" id="GO:0005739">
    <property type="term" value="C:mitochondrion"/>
    <property type="evidence" value="ECO:0000314"/>
    <property type="project" value="UniProtKB"/>
</dbReference>
<dbReference type="GO" id="GO:0046872">
    <property type="term" value="F:metal ion binding"/>
    <property type="evidence" value="ECO:0007669"/>
    <property type="project" value="UniProtKB-KW"/>
</dbReference>
<dbReference type="GO" id="GO:0000166">
    <property type="term" value="F:nucleotide binding"/>
    <property type="evidence" value="ECO:0007669"/>
    <property type="project" value="UniProtKB-KW"/>
</dbReference>
<dbReference type="GO" id="GO:0050265">
    <property type="term" value="F:RNA uridylyltransferase activity"/>
    <property type="evidence" value="ECO:0000314"/>
    <property type="project" value="UniProtKB"/>
</dbReference>
<dbReference type="GO" id="GO:0006397">
    <property type="term" value="P:mRNA processing"/>
    <property type="evidence" value="ECO:0007669"/>
    <property type="project" value="UniProtKB-KW"/>
</dbReference>
<dbReference type="GO" id="GO:0031123">
    <property type="term" value="P:RNA 3'-end processing"/>
    <property type="evidence" value="ECO:0007669"/>
    <property type="project" value="TreeGrafter"/>
</dbReference>
<dbReference type="CDD" id="cd05402">
    <property type="entry name" value="NT_PAP_TUTase"/>
    <property type="match status" value="1"/>
</dbReference>
<dbReference type="FunFam" id="3.30.460.10:FF:000069">
    <property type="entry name" value="Mitochondrial editosome-like complex associated TUTase"/>
    <property type="match status" value="1"/>
</dbReference>
<dbReference type="Gene3D" id="1.10.1410.10">
    <property type="match status" value="1"/>
</dbReference>
<dbReference type="Gene3D" id="3.30.460.10">
    <property type="entry name" value="Beta Polymerase, domain 2"/>
    <property type="match status" value="1"/>
</dbReference>
<dbReference type="InterPro" id="IPR054708">
    <property type="entry name" value="MTPAP-like_central"/>
</dbReference>
<dbReference type="InterPro" id="IPR043519">
    <property type="entry name" value="NT_sf"/>
</dbReference>
<dbReference type="PANTHER" id="PTHR12271:SF97">
    <property type="entry name" value="MITOCHONDRIAL EDITOSOME-LIKE COMPLEX ASSOCIATED TUTASE"/>
    <property type="match status" value="1"/>
</dbReference>
<dbReference type="PANTHER" id="PTHR12271">
    <property type="entry name" value="POLY A POLYMERASE CID PAP -RELATED"/>
    <property type="match status" value="1"/>
</dbReference>
<dbReference type="Pfam" id="PF22600">
    <property type="entry name" value="MTPAP-like_central"/>
    <property type="match status" value="1"/>
</dbReference>
<dbReference type="SUPFAM" id="SSF81301">
    <property type="entry name" value="Nucleotidyltransferase"/>
    <property type="match status" value="1"/>
</dbReference>
<dbReference type="SUPFAM" id="SSF81631">
    <property type="entry name" value="PAP/OAS1 substrate-binding domain"/>
    <property type="match status" value="1"/>
</dbReference>
<gene>
    <name evidence="4" type="primary">MEAT1</name>
</gene>
<name>TUT7_TRYBB</name>
<evidence type="ECO:0000255" key="1"/>
<evidence type="ECO:0000269" key="2">
    <source>
    </source>
</evidence>
<evidence type="ECO:0000269" key="3">
    <source>
    </source>
</evidence>
<evidence type="ECO:0000303" key="4">
    <source>
    </source>
</evidence>
<evidence type="ECO:0000303" key="5">
    <source>
    </source>
</evidence>
<evidence type="ECO:0000305" key="6"/>
<evidence type="ECO:0000312" key="7">
    <source>
        <dbReference type="EMBL" id="ACT83521.1"/>
    </source>
</evidence>
<evidence type="ECO:0007744" key="8">
    <source>
        <dbReference type="PDB" id="3HIY"/>
    </source>
</evidence>
<evidence type="ECO:0007744" key="9">
    <source>
        <dbReference type="PDB" id="3HJ1"/>
    </source>
</evidence>
<evidence type="ECO:0007744" key="10">
    <source>
        <dbReference type="PDB" id="3HJ4"/>
    </source>
</evidence>
<evidence type="ECO:0007829" key="11">
    <source>
        <dbReference type="PDB" id="3HIY"/>
    </source>
</evidence>
<evidence type="ECO:0007829" key="12">
    <source>
        <dbReference type="PDB" id="3HJ4"/>
    </source>
</evidence>
<protein>
    <recommendedName>
        <fullName evidence="6">Terminal uridylyltransferase 7</fullName>
        <shortName evidence="6">TUTase 7</shortName>
        <ecNumber evidence="2 3">2.7.7.52</ecNumber>
    </recommendedName>
    <alternativeName>
        <fullName evidence="4">Mitochondrial editosome-like complex associated TUTase</fullName>
        <shortName evidence="5">TbMEAT1</shortName>
    </alternativeName>
</protein>
<feature type="transit peptide" description="Mitochondrion" evidence="1">
    <location>
        <begin position="1"/>
        <end position="15"/>
    </location>
</feature>
<feature type="chain" id="PRO_0000449794" description="Terminal uridylyltransferase 7" evidence="1">
    <location>
        <begin position="16"/>
        <end position="406"/>
    </location>
</feature>
<feature type="binding site" evidence="3 8 9">
    <location>
        <position position="54"/>
    </location>
    <ligand>
        <name>UTP</name>
        <dbReference type="ChEBI" id="CHEBI:46398"/>
    </ligand>
</feature>
<feature type="binding site" evidence="3 8">
    <location>
        <begin position="64"/>
        <end position="65"/>
    </location>
    <ligand>
        <name>UTP</name>
        <dbReference type="ChEBI" id="CHEBI:46398"/>
    </ligand>
</feature>
<feature type="binding site" evidence="3 8">
    <location>
        <position position="65"/>
    </location>
    <ligand>
        <name>Mg(2+)</name>
        <dbReference type="ChEBI" id="CHEBI:18420"/>
        <note>catalytic</note>
    </ligand>
</feature>
<feature type="binding site" evidence="3 8">
    <location>
        <position position="67"/>
    </location>
    <ligand>
        <name>Mg(2+)</name>
        <dbReference type="ChEBI" id="CHEBI:18420"/>
        <note>catalytic</note>
    </ligand>
</feature>
<feature type="binding site" evidence="3 8 9">
    <location>
        <begin position="138"/>
        <end position="142"/>
    </location>
    <ligand>
        <name>UTP</name>
        <dbReference type="ChEBI" id="CHEBI:46398"/>
    </ligand>
</feature>
<feature type="binding site" evidence="3 8 9">
    <location>
        <position position="164"/>
    </location>
    <ligand>
        <name>UTP</name>
        <dbReference type="ChEBI" id="CHEBI:46398"/>
    </ligand>
</feature>
<feature type="binding site" evidence="3 8 9">
    <location>
        <position position="168"/>
    </location>
    <ligand>
        <name>UTP</name>
        <dbReference type="ChEBI" id="CHEBI:46398"/>
    </ligand>
</feature>
<feature type="binding site" evidence="3 8 9">
    <location>
        <begin position="181"/>
        <end position="183"/>
    </location>
    <ligand>
        <name>UTP</name>
        <dbReference type="ChEBI" id="CHEBI:46398"/>
    </ligand>
</feature>
<feature type="mutagenesis site" description="No effect on catalytic activity. However, shows a moderate lengthening in the extension of the product at longer incubation time. Complete loss of catalytic activity; when associated with A-67; A-181; D-181; F-183; A-335 and A-345. Partial loss of catalytic activity; when associated with A-141; A-338 and R-344. No loss of catalytic activity; when associated with A-344." evidence="3">
    <location>
        <begin position="2"/>
        <end position="25"/>
    </location>
</feature>
<feature type="mutagenesis site" description="Causes growth arrest of the procyclic form. Complete loss of catalytic activity; when associated with 2-N--H-25 DEL." evidence="2 3">
    <original>D</original>
    <variation>A</variation>
    <location>
        <position position="67"/>
    </location>
</feature>
<feature type="mutagenesis site" description="Partial loss of catalytic activity; when associated with 2-N--H-25 DEL." evidence="3">
    <original>N</original>
    <variation>A</variation>
    <location>
        <position position="141"/>
    </location>
</feature>
<feature type="mutagenesis site" description="Complete loss of catalytic activity; when associated with 2-N--H-25 DEL." evidence="3">
    <original>N</original>
    <variation>A</variation>
    <variation>D</variation>
    <location>
        <position position="181"/>
    </location>
</feature>
<feature type="mutagenesis site" description="Complete loss of catalytic activity; when associated with 2-N--H-25 DEL." evidence="3">
    <original>F</original>
    <variation>A</variation>
    <location>
        <position position="183"/>
    </location>
</feature>
<feature type="mutagenesis site" description="Complete loss of catalytic activity; when associated with 2-N--H-25 DEL." evidence="3">
    <original>D</original>
    <variation>A</variation>
    <location>
        <position position="335"/>
    </location>
</feature>
<feature type="mutagenesis site" description="Partial loss of catalytic activity; when associated with 2-N--H-25 DEL." evidence="3">
    <original>N</original>
    <variation>A</variation>
    <location>
        <position position="338"/>
    </location>
</feature>
<feature type="mutagenesis site" description="No effect on catalytic activity; when associated with 2-N--H-25 DEL." evidence="3">
    <original>C</original>
    <variation>A</variation>
    <location>
        <position position="342"/>
    </location>
</feature>
<feature type="mutagenesis site" description="Partial loss of catalytic activity; when associated with 2-N--H-25 DEL." evidence="3">
    <original>R</original>
    <variation>A</variation>
    <location>
        <position position="344"/>
    </location>
</feature>
<feature type="mutagenesis site" description="Complete loss of catalytic activity; when associated with 2-N--H-25 DEL." evidence="3">
    <original>R</original>
    <variation>A</variation>
    <location>
        <position position="345"/>
    </location>
</feature>
<feature type="helix" evidence="12">
    <location>
        <begin position="4"/>
        <end position="19"/>
    </location>
</feature>
<feature type="helix" evidence="12">
    <location>
        <begin position="25"/>
        <end position="43"/>
    </location>
</feature>
<feature type="strand" evidence="12">
    <location>
        <begin position="48"/>
        <end position="53"/>
    </location>
</feature>
<feature type="helix" evidence="12">
    <location>
        <begin position="54"/>
        <end position="57"/>
    </location>
</feature>
<feature type="strand" evidence="12">
    <location>
        <begin position="66"/>
        <end position="71"/>
    </location>
</feature>
<feature type="helix" evidence="12">
    <location>
        <begin position="77"/>
        <end position="79"/>
    </location>
</feature>
<feature type="helix" evidence="12">
    <location>
        <begin position="83"/>
        <end position="103"/>
    </location>
</feature>
<feature type="strand" evidence="12">
    <location>
        <begin position="106"/>
        <end position="111"/>
    </location>
</feature>
<feature type="strand" evidence="12">
    <location>
        <begin position="113"/>
        <end position="115"/>
    </location>
</feature>
<feature type="strand" evidence="12">
    <location>
        <begin position="117"/>
        <end position="121"/>
    </location>
</feature>
<feature type="turn" evidence="12">
    <location>
        <begin position="123"/>
        <end position="125"/>
    </location>
</feature>
<feature type="strand" evidence="12">
    <location>
        <begin position="128"/>
        <end position="133"/>
    </location>
</feature>
<feature type="helix" evidence="12">
    <location>
        <begin position="136"/>
        <end position="150"/>
    </location>
</feature>
<feature type="helix" evidence="12">
    <location>
        <begin position="153"/>
        <end position="169"/>
    </location>
</feature>
<feature type="helix" evidence="12">
    <location>
        <begin position="175"/>
        <end position="177"/>
    </location>
</feature>
<feature type="helix" evidence="12">
    <location>
        <begin position="182"/>
        <end position="195"/>
    </location>
</feature>
<feature type="helix" evidence="12">
    <location>
        <begin position="214"/>
        <end position="221"/>
    </location>
</feature>
<feature type="helix" evidence="12">
    <location>
        <begin position="228"/>
        <end position="232"/>
    </location>
</feature>
<feature type="strand" evidence="11">
    <location>
        <begin position="233"/>
        <end position="235"/>
    </location>
</feature>
<feature type="helix" evidence="12">
    <location>
        <begin position="237"/>
        <end position="257"/>
    </location>
</feature>
<feature type="turn" evidence="12">
    <location>
        <begin position="260"/>
        <end position="262"/>
    </location>
</feature>
<feature type="strand" evidence="12">
    <location>
        <begin position="267"/>
        <end position="269"/>
    </location>
</feature>
<feature type="helix" evidence="12">
    <location>
        <begin position="274"/>
        <end position="302"/>
    </location>
</feature>
<feature type="helix" evidence="12">
    <location>
        <begin position="304"/>
        <end position="306"/>
    </location>
</feature>
<feature type="helix" evidence="12">
    <location>
        <begin position="311"/>
        <end position="323"/>
    </location>
</feature>
<feature type="strand" evidence="12">
    <location>
        <begin position="327"/>
        <end position="330"/>
    </location>
</feature>
<feature type="turn" evidence="12">
    <location>
        <begin position="336"/>
        <end position="338"/>
    </location>
</feature>
<feature type="turn" evidence="12">
    <location>
        <begin position="342"/>
        <end position="345"/>
    </location>
</feature>
<feature type="helix" evidence="12">
    <location>
        <begin position="348"/>
        <end position="350"/>
    </location>
</feature>
<feature type="helix" evidence="12">
    <location>
        <begin position="351"/>
        <end position="365"/>
    </location>
</feature>
<feature type="turn" evidence="12">
    <location>
        <begin position="366"/>
        <end position="368"/>
    </location>
</feature>
<feature type="helix" evidence="12">
    <location>
        <begin position="369"/>
        <end position="371"/>
    </location>
</feature>
<feature type="helix" evidence="12">
    <location>
        <begin position="374"/>
        <end position="377"/>
    </location>
</feature>
<sequence length="406" mass="46764">MNVAKREFIRGMMAHYRASLPPPEHSVVIHELQKRVLDIGMLAVNKAHVELFGSHVSGFCTPHSDADISLTYRNFSPWLQGMERVDEQNNKRMTRFGKEASAMGMEDVRYIRARIPVVQFTDGVTGIHCDVSIGNIGGVENSKILCAIRQVFPDFYGAYIHLVKAWGKAREVIAPERSTFNSFTVTTMALMVLQELGLLPVFSKPTGEFGELTVADAEMLLQEFKLPPIYDSLHDDDEKLGEAVFFCLQRFAEYYAKYDFSAGTVSLIHPRRHRTVYERVVRRHLELLGSRKRLEWEKHIAEHKEDGPLDENDFSASMQNETTQRPSNSPYVVEDFVNYVNCGRRVQASRVRHIQQEFNRLREMLIDKESELKFDEVFRESDTVPRFQGFEGVGTRDHRVKTFRPQ</sequence>